<organism>
    <name type="scientific">Dictyostelium discoideum</name>
    <name type="common">Social amoeba</name>
    <dbReference type="NCBI Taxonomy" id="44689"/>
    <lineage>
        <taxon>Eukaryota</taxon>
        <taxon>Amoebozoa</taxon>
        <taxon>Evosea</taxon>
        <taxon>Eumycetozoa</taxon>
        <taxon>Dictyostelia</taxon>
        <taxon>Dictyosteliales</taxon>
        <taxon>Dictyosteliaceae</taxon>
        <taxon>Dictyostelium</taxon>
    </lineage>
</organism>
<evidence type="ECO:0000256" key="1">
    <source>
        <dbReference type="SAM" id="MobiDB-lite"/>
    </source>
</evidence>
<name>Y5247_DICDI</name>
<accession>Q54UP6</accession>
<reference key="1">
    <citation type="journal article" date="2005" name="Nature">
        <title>The genome of the social amoeba Dictyostelium discoideum.</title>
        <authorList>
            <person name="Eichinger L."/>
            <person name="Pachebat J.A."/>
            <person name="Gloeckner G."/>
            <person name="Rajandream M.A."/>
            <person name="Sucgang R."/>
            <person name="Berriman M."/>
            <person name="Song J."/>
            <person name="Olsen R."/>
            <person name="Szafranski K."/>
            <person name="Xu Q."/>
            <person name="Tunggal B."/>
            <person name="Kummerfeld S."/>
            <person name="Madera M."/>
            <person name="Konfortov B.A."/>
            <person name="Rivero F."/>
            <person name="Bankier A.T."/>
            <person name="Lehmann R."/>
            <person name="Hamlin N."/>
            <person name="Davies R."/>
            <person name="Gaudet P."/>
            <person name="Fey P."/>
            <person name="Pilcher K."/>
            <person name="Chen G."/>
            <person name="Saunders D."/>
            <person name="Sodergren E.J."/>
            <person name="Davis P."/>
            <person name="Kerhornou A."/>
            <person name="Nie X."/>
            <person name="Hall N."/>
            <person name="Anjard C."/>
            <person name="Hemphill L."/>
            <person name="Bason N."/>
            <person name="Farbrother P."/>
            <person name="Desany B."/>
            <person name="Just E."/>
            <person name="Morio T."/>
            <person name="Rost R."/>
            <person name="Churcher C.M."/>
            <person name="Cooper J."/>
            <person name="Haydock S."/>
            <person name="van Driessche N."/>
            <person name="Cronin A."/>
            <person name="Goodhead I."/>
            <person name="Muzny D.M."/>
            <person name="Mourier T."/>
            <person name="Pain A."/>
            <person name="Lu M."/>
            <person name="Harper D."/>
            <person name="Lindsay R."/>
            <person name="Hauser H."/>
            <person name="James K.D."/>
            <person name="Quiles M."/>
            <person name="Madan Babu M."/>
            <person name="Saito T."/>
            <person name="Buchrieser C."/>
            <person name="Wardroper A."/>
            <person name="Felder M."/>
            <person name="Thangavelu M."/>
            <person name="Johnson D."/>
            <person name="Knights A."/>
            <person name="Loulseged H."/>
            <person name="Mungall K.L."/>
            <person name="Oliver K."/>
            <person name="Price C."/>
            <person name="Quail M.A."/>
            <person name="Urushihara H."/>
            <person name="Hernandez J."/>
            <person name="Rabbinowitsch E."/>
            <person name="Steffen D."/>
            <person name="Sanders M."/>
            <person name="Ma J."/>
            <person name="Kohara Y."/>
            <person name="Sharp S."/>
            <person name="Simmonds M.N."/>
            <person name="Spiegler S."/>
            <person name="Tivey A."/>
            <person name="Sugano S."/>
            <person name="White B."/>
            <person name="Walker D."/>
            <person name="Woodward J.R."/>
            <person name="Winckler T."/>
            <person name="Tanaka Y."/>
            <person name="Shaulsky G."/>
            <person name="Schleicher M."/>
            <person name="Weinstock G.M."/>
            <person name="Rosenthal A."/>
            <person name="Cox E.C."/>
            <person name="Chisholm R.L."/>
            <person name="Gibbs R.A."/>
            <person name="Loomis W.F."/>
            <person name="Platzer M."/>
            <person name="Kay R.R."/>
            <person name="Williams J.G."/>
            <person name="Dear P.H."/>
            <person name="Noegel A.A."/>
            <person name="Barrell B.G."/>
            <person name="Kuspa A."/>
        </authorList>
    </citation>
    <scope>NUCLEOTIDE SEQUENCE [LARGE SCALE GENOMIC DNA]</scope>
    <source>
        <strain>AX4</strain>
    </source>
</reference>
<proteinExistence type="predicted"/>
<protein>
    <recommendedName>
        <fullName>Putative uncharacterized protein DDB_G0280905</fullName>
    </recommendedName>
</protein>
<keyword id="KW-1185">Reference proteome</keyword>
<feature type="chain" id="PRO_0000352427" description="Putative uncharacterized protein DDB_G0280905">
    <location>
        <begin position="1"/>
        <end position="161"/>
    </location>
</feature>
<feature type="region of interest" description="Disordered" evidence="1">
    <location>
        <begin position="47"/>
        <end position="83"/>
    </location>
</feature>
<feature type="region of interest" description="Disordered" evidence="1">
    <location>
        <begin position="104"/>
        <end position="137"/>
    </location>
</feature>
<feature type="compositionally biased region" description="Basic residues" evidence="1">
    <location>
        <begin position="50"/>
        <end position="64"/>
    </location>
</feature>
<feature type="compositionally biased region" description="Low complexity" evidence="1">
    <location>
        <begin position="73"/>
        <end position="83"/>
    </location>
</feature>
<feature type="compositionally biased region" description="Low complexity" evidence="1">
    <location>
        <begin position="115"/>
        <end position="130"/>
    </location>
</feature>
<gene>
    <name type="ORF">DDB_G0280905</name>
</gene>
<sequence>MIIQKILQGAVLDIVQKKLVDKLASNKQFQQMSVQFKDKMDEITGEKPAKRNIHGHNNHTRSSNHPHSGAHSNINHNNNNNINFQNVKYTNDIHENARIYEQQRRLQQNGGGGDSSSSRSSNNNNSTNDNKPQSKNYFTHLFESFKEELNDEADKLNGKKK</sequence>
<dbReference type="EMBL" id="AAFI02000039">
    <property type="protein sequence ID" value="EAL66994.1"/>
    <property type="molecule type" value="Genomic_DNA"/>
</dbReference>
<dbReference type="RefSeq" id="XP_640975.1">
    <property type="nucleotide sequence ID" value="XM_635883.1"/>
</dbReference>
<dbReference type="SMR" id="Q54UP6"/>
<dbReference type="FunCoup" id="Q54UP6">
    <property type="interactions" value="435"/>
</dbReference>
<dbReference type="PaxDb" id="44689-DDB0215247"/>
<dbReference type="EnsemblProtists" id="EAL66994">
    <property type="protein sequence ID" value="EAL66994"/>
    <property type="gene ID" value="DDB_G0280905"/>
</dbReference>
<dbReference type="GeneID" id="8622779"/>
<dbReference type="KEGG" id="ddi:DDB_G0280905"/>
<dbReference type="dictyBase" id="DDB_G0280905"/>
<dbReference type="VEuPathDB" id="AmoebaDB:DDB_G0280905"/>
<dbReference type="eggNOG" id="ENOG502RI74">
    <property type="taxonomic scope" value="Eukaryota"/>
</dbReference>
<dbReference type="HOGENOM" id="CLU_1646849_0_0_1"/>
<dbReference type="InParanoid" id="Q54UP6"/>
<dbReference type="OMA" id="ARIYEQQ"/>
<dbReference type="PRO" id="PR:Q54UP6"/>
<dbReference type="Proteomes" id="UP000002195">
    <property type="component" value="Chromosome 3"/>
</dbReference>